<accession>Q86SF2</accession>
<accession>B3KQU3</accession>
<accession>Q7Z5W7</accession>
<accession>Q9UJ28</accession>
<evidence type="ECO:0000250" key="1"/>
<evidence type="ECO:0000255" key="2"/>
<evidence type="ECO:0000255" key="3">
    <source>
        <dbReference type="PROSITE-ProRule" id="PRU00174"/>
    </source>
</evidence>
<evidence type="ECO:0000256" key="4">
    <source>
        <dbReference type="SAM" id="MobiDB-lite"/>
    </source>
</evidence>
<evidence type="ECO:0000269" key="5">
    <source>
    </source>
</evidence>
<evidence type="ECO:0000269" key="6">
    <source>
    </source>
</evidence>
<evidence type="ECO:0000305" key="7"/>
<evidence type="ECO:0000305" key="8">
    <source>
    </source>
</evidence>
<evidence type="ECO:0000305" key="9">
    <source>
    </source>
</evidence>
<evidence type="ECO:0007829" key="10">
    <source>
        <dbReference type="PDB" id="6IWR"/>
    </source>
</evidence>
<name>GALT7_HUMAN</name>
<proteinExistence type="evidence at protein level"/>
<feature type="chain" id="PRO_0000059116" description="N-acetylgalactosaminyltransferase 7">
    <location>
        <begin position="1"/>
        <end position="657"/>
    </location>
</feature>
<feature type="topological domain" description="Cytoplasmic" evidence="2">
    <location>
        <begin position="1"/>
        <end position="6"/>
    </location>
</feature>
<feature type="transmembrane region" description="Helical; Signal-anchor for type II membrane protein" evidence="2">
    <location>
        <begin position="7"/>
        <end position="29"/>
    </location>
</feature>
<feature type="topological domain" description="Lumenal" evidence="2">
    <location>
        <begin position="30"/>
        <end position="657"/>
    </location>
</feature>
<feature type="domain" description="Ricin B-type lectin" evidence="3">
    <location>
        <begin position="532"/>
        <end position="652"/>
    </location>
</feature>
<feature type="region of interest" description="Disordered" evidence="4">
    <location>
        <begin position="31"/>
        <end position="65"/>
    </location>
</feature>
<feature type="region of interest" description="Catalytic subdomain A">
    <location>
        <begin position="206"/>
        <end position="317"/>
    </location>
</feature>
<feature type="region of interest" description="Catalytic subdomain B">
    <location>
        <begin position="381"/>
        <end position="443"/>
    </location>
</feature>
<feature type="binding site" evidence="1">
    <location>
        <position position="247"/>
    </location>
    <ligand>
        <name>substrate</name>
    </ligand>
</feature>
<feature type="binding site" evidence="1">
    <location>
        <position position="277"/>
    </location>
    <ligand>
        <name>substrate</name>
    </ligand>
</feature>
<feature type="binding site" evidence="1">
    <location>
        <position position="301"/>
    </location>
    <ligand>
        <name>Mn(2+)</name>
        <dbReference type="ChEBI" id="CHEBI:29035"/>
    </ligand>
</feature>
<feature type="binding site" evidence="1">
    <location>
        <position position="303"/>
    </location>
    <ligand>
        <name>Mn(2+)</name>
        <dbReference type="ChEBI" id="CHEBI:29035"/>
    </ligand>
</feature>
<feature type="binding site" evidence="1">
    <location>
        <position position="412"/>
    </location>
    <ligand>
        <name>substrate</name>
    </ligand>
</feature>
<feature type="binding site" evidence="1">
    <location>
        <position position="440"/>
    </location>
    <ligand>
        <name>Mn(2+)</name>
        <dbReference type="ChEBI" id="CHEBI:29035"/>
    </ligand>
</feature>
<feature type="binding site" evidence="1">
    <location>
        <position position="443"/>
    </location>
    <ligand>
        <name>substrate</name>
    </ligand>
</feature>
<feature type="disulfide bond" evidence="3">
    <location>
        <begin position="197"/>
        <end position="435"/>
    </location>
</feature>
<feature type="disulfide bond" evidence="3">
    <location>
        <begin position="426"/>
        <end position="507"/>
    </location>
</feature>
<feature type="disulfide bond" evidence="3">
    <location>
        <begin position="545"/>
        <end position="562"/>
    </location>
</feature>
<feature type="disulfide bond" evidence="3">
    <location>
        <begin position="585"/>
        <end position="600"/>
    </location>
</feature>
<feature type="disulfide bond" evidence="3">
    <location>
        <begin position="625"/>
        <end position="640"/>
    </location>
</feature>
<feature type="sequence conflict" description="In Ref. 1; CAB60270." evidence="7" ref="1">
    <original>S</original>
    <variation>N</variation>
    <location>
        <position position="188"/>
    </location>
</feature>
<feature type="sequence conflict" description="In Ref. 1; CAB60270." evidence="7" ref="1">
    <original>F</original>
    <variation>C</variation>
    <location>
        <position position="392"/>
    </location>
</feature>
<feature type="sequence conflict" description="In Ref. 1; CAB60270." evidence="7" ref="1">
    <original>G</original>
    <variation>S</variation>
    <location>
        <position position="408"/>
    </location>
</feature>
<feature type="sequence conflict" description="In Ref. 1; CAB60270." evidence="7" ref="1">
    <original>K</original>
    <variation>Q</variation>
    <location>
        <position position="508"/>
    </location>
</feature>
<feature type="strand" evidence="10">
    <location>
        <begin position="134"/>
        <end position="136"/>
    </location>
</feature>
<feature type="strand" evidence="10">
    <location>
        <begin position="144"/>
        <end position="147"/>
    </location>
</feature>
<feature type="helix" evidence="10">
    <location>
        <begin position="163"/>
        <end position="173"/>
    </location>
</feature>
<feature type="helix" evidence="10">
    <location>
        <begin position="177"/>
        <end position="182"/>
    </location>
</feature>
<feature type="helix" evidence="10">
    <location>
        <begin position="195"/>
        <end position="199"/>
    </location>
</feature>
<feature type="strand" evidence="10">
    <location>
        <begin position="209"/>
        <end position="217"/>
    </location>
</feature>
<feature type="helix" evidence="10">
    <location>
        <begin position="220"/>
        <end position="233"/>
    </location>
</feature>
<feature type="helix" evidence="10">
    <location>
        <begin position="236"/>
        <end position="238"/>
    </location>
</feature>
<feature type="strand" evidence="10">
    <location>
        <begin position="239"/>
        <end position="246"/>
    </location>
</feature>
<feature type="helix" evidence="10">
    <location>
        <begin position="252"/>
        <end position="254"/>
    </location>
</feature>
<feature type="helix" evidence="10">
    <location>
        <begin position="257"/>
        <end position="261"/>
    </location>
</feature>
<feature type="helix" evidence="10">
    <location>
        <begin position="262"/>
        <end position="265"/>
    </location>
</feature>
<feature type="strand" evidence="10">
    <location>
        <begin position="268"/>
        <end position="273"/>
    </location>
</feature>
<feature type="helix" evidence="10">
    <location>
        <begin position="279"/>
        <end position="290"/>
    </location>
</feature>
<feature type="strand" evidence="10">
    <location>
        <begin position="295"/>
        <end position="300"/>
    </location>
</feature>
<feature type="strand" evidence="10">
    <location>
        <begin position="302"/>
        <end position="306"/>
    </location>
</feature>
<feature type="helix" evidence="10">
    <location>
        <begin position="311"/>
        <end position="320"/>
    </location>
</feature>
<feature type="strand" evidence="10">
    <location>
        <begin position="324"/>
        <end position="334"/>
    </location>
</feature>
<feature type="turn" evidence="10">
    <location>
        <begin position="335"/>
        <end position="337"/>
    </location>
</feature>
<feature type="strand" evidence="10">
    <location>
        <begin position="352"/>
        <end position="356"/>
    </location>
</feature>
<feature type="strand" evidence="10">
    <location>
        <begin position="362"/>
        <end position="366"/>
    </location>
</feature>
<feature type="helix" evidence="10">
    <location>
        <begin position="369"/>
        <end position="373"/>
    </location>
</feature>
<feature type="strand" evidence="10">
    <location>
        <begin position="376"/>
        <end position="380"/>
    </location>
</feature>
<feature type="strand" evidence="10">
    <location>
        <begin position="389"/>
        <end position="395"/>
    </location>
</feature>
<feature type="helix" evidence="10">
    <location>
        <begin position="396"/>
        <end position="402"/>
    </location>
</feature>
<feature type="strand" evidence="10">
    <location>
        <begin position="411"/>
        <end position="413"/>
    </location>
</feature>
<feature type="helix" evidence="10">
    <location>
        <begin position="415"/>
        <end position="425"/>
    </location>
</feature>
<feature type="strand" evidence="10">
    <location>
        <begin position="429"/>
        <end position="442"/>
    </location>
</feature>
<feature type="strand" evidence="10">
    <location>
        <begin position="456"/>
        <end position="458"/>
    </location>
</feature>
<feature type="helix" evidence="10">
    <location>
        <begin position="460"/>
        <end position="472"/>
    </location>
</feature>
<feature type="helix" evidence="10">
    <location>
        <begin position="474"/>
        <end position="476"/>
    </location>
</feature>
<feature type="helix" evidence="10">
    <location>
        <begin position="477"/>
        <end position="483"/>
    </location>
</feature>
<feature type="helix" evidence="10">
    <location>
        <begin position="485"/>
        <end position="487"/>
    </location>
</feature>
<feature type="helix" evidence="10">
    <location>
        <begin position="496"/>
        <end position="504"/>
    </location>
</feature>
<feature type="helix" evidence="10">
    <location>
        <begin position="510"/>
        <end position="516"/>
    </location>
</feature>
<feature type="helix" evidence="10">
    <location>
        <begin position="521"/>
        <end position="523"/>
    </location>
</feature>
<feature type="strand" evidence="10">
    <location>
        <begin position="531"/>
        <end position="539"/>
    </location>
</feature>
<feature type="strand" evidence="10">
    <location>
        <begin position="542"/>
        <end position="547"/>
    </location>
</feature>
<feature type="strand" evidence="10">
    <location>
        <begin position="558"/>
        <end position="561"/>
    </location>
</feature>
<feature type="helix" evidence="10">
    <location>
        <begin position="567"/>
        <end position="569"/>
    </location>
</feature>
<feature type="strand" evidence="10">
    <location>
        <begin position="571"/>
        <end position="574"/>
    </location>
</feature>
<feature type="strand" evidence="10">
    <location>
        <begin position="579"/>
        <end position="581"/>
    </location>
</feature>
<feature type="strand" evidence="10">
    <location>
        <begin position="584"/>
        <end position="589"/>
    </location>
</feature>
<feature type="turn" evidence="10">
    <location>
        <begin position="590"/>
        <end position="593"/>
    </location>
</feature>
<feature type="strand" evidence="10">
    <location>
        <begin position="594"/>
        <end position="599"/>
    </location>
</feature>
<feature type="strand" evidence="10">
    <location>
        <begin position="608"/>
        <end position="611"/>
    </location>
</feature>
<feature type="turn" evidence="10">
    <location>
        <begin position="612"/>
        <end position="615"/>
    </location>
</feature>
<feature type="strand" evidence="10">
    <location>
        <begin position="616"/>
        <end position="622"/>
    </location>
</feature>
<feature type="strand" evidence="10">
    <location>
        <begin position="625"/>
        <end position="628"/>
    </location>
</feature>
<feature type="strand" evidence="10">
    <location>
        <begin position="630"/>
        <end position="632"/>
    </location>
</feature>
<feature type="strand" evidence="10">
    <location>
        <begin position="634"/>
        <end position="638"/>
    </location>
</feature>
<feature type="helix" evidence="10">
    <location>
        <begin position="645"/>
        <end position="647"/>
    </location>
</feature>
<feature type="strand" evidence="10">
    <location>
        <begin position="649"/>
        <end position="652"/>
    </location>
</feature>
<gene>
    <name type="primary">GALNT7</name>
</gene>
<comment type="function">
    <text evidence="5 6">Glycopeptide transferase involved in O-linked oligosaccharide biosynthesis, which catalyzes the transfer of an N-acetyl-D-galactosamine residue to an already glycosylated peptide. In contrast to other proteins of the family, it does not act as a peptide transferase that transfers GalNAc onto serine or threonine residue on the protein receptor, but instead requires the prior addition of a GalNAc on a peptide before adding additional GalNAc moieties. Some peptide transferase activity is however not excluded, considering that its appropriate peptide substrate may remain unidentified.</text>
</comment>
<comment type="catalytic activity">
    <reaction evidence="5 6">
        <text>L-seryl-[protein] + UDP-N-acetyl-alpha-D-galactosamine = a 3-O-[N-acetyl-alpha-D-galactosaminyl]-L-seryl-[protein] + UDP + H(+)</text>
        <dbReference type="Rhea" id="RHEA:23956"/>
        <dbReference type="Rhea" id="RHEA-COMP:9863"/>
        <dbReference type="Rhea" id="RHEA-COMP:12788"/>
        <dbReference type="ChEBI" id="CHEBI:15378"/>
        <dbReference type="ChEBI" id="CHEBI:29999"/>
        <dbReference type="ChEBI" id="CHEBI:53604"/>
        <dbReference type="ChEBI" id="CHEBI:58223"/>
        <dbReference type="ChEBI" id="CHEBI:67138"/>
        <dbReference type="EC" id="2.4.1.41"/>
    </reaction>
</comment>
<comment type="catalytic activity">
    <reaction evidence="5 6">
        <text>L-threonyl-[protein] + UDP-N-acetyl-alpha-D-galactosamine = a 3-O-[N-acetyl-alpha-D-galactosaminyl]-L-threonyl-[protein] + UDP + H(+)</text>
        <dbReference type="Rhea" id="RHEA:52424"/>
        <dbReference type="Rhea" id="RHEA-COMP:11060"/>
        <dbReference type="Rhea" id="RHEA-COMP:11689"/>
        <dbReference type="ChEBI" id="CHEBI:15378"/>
        <dbReference type="ChEBI" id="CHEBI:30013"/>
        <dbReference type="ChEBI" id="CHEBI:58223"/>
        <dbReference type="ChEBI" id="CHEBI:67138"/>
        <dbReference type="ChEBI" id="CHEBI:87075"/>
        <dbReference type="EC" id="2.4.1.41"/>
    </reaction>
</comment>
<comment type="cofactor">
    <cofactor evidence="1">
        <name>Mn(2+)</name>
        <dbReference type="ChEBI" id="CHEBI:29035"/>
    </cofactor>
</comment>
<comment type="pathway">
    <text evidence="8 9">Protein modification; protein glycosylation.</text>
</comment>
<comment type="subcellular location">
    <subcellularLocation>
        <location evidence="1">Golgi apparatus membrane</location>
        <topology evidence="1">Single-pass type II membrane protein</topology>
    </subcellularLocation>
</comment>
<comment type="tissue specificity">
    <text evidence="5">Widely expressed. Expressed in uterus, retina, kidney, small intestine, omentum, stomach and CNS.</text>
</comment>
<comment type="domain">
    <text evidence="1">There are two conserved domains in the glycosyltransferase region: the N-terminal domain (domain A, also called GT1 motif), which is probably involved in manganese coordination and substrate binding and the C-terminal domain (domain B, also called Gal/GalNAc-T motif), which is probably involved in catalytic reaction and UDP-Gal binding.</text>
</comment>
<comment type="domain">
    <text evidence="1">The ricin B-type lectin domain binds to GalNAc and contributes to the glycopeptide specificity.</text>
</comment>
<comment type="similarity">
    <text evidence="7">Belongs to the glycosyltransferase 2 family. GalNAc-T subfamily.</text>
</comment>
<comment type="online information" name="Functional Glycomics Gateway - GTase">
    <link uri="http://www.functionalglycomics.org/glycomics/molecule/jsp/glycoEnzyme/viewGlycoEnzyme.jsp?gbpId=gt_hum_489"/>
    <text>N-acetylgalactosaminyltransferase 7</text>
</comment>
<sequence>MRLKIGFILRSLLVVGSFLGLVVLWSSLTPRPDDPSPLSRMREDRDVNDPMPNRGGNGLAPGEDRFKPVVPWPHVEGVEVDLESIRRINKAKNEQEHHAGGDSQKDIMQRQYLTFKPQTFTYHDPVLRPGILGNFEPKEPEPPGVVGGPGEKAKPLVLGPEFKQAIQASIKEFGFNMVASDMISLDRSVNDLRQEECKYWHYDENLLTSSVVIVFHNEGWSTLMRTVHSVIKRTPRKYLAEIVLIDDFSNKEHLKEKLDEYIKLWNGLVKVFRNERREGLIQARSIGAQKAKLGQVLIYLDAHCEVAVNWYAPLVAPISKDRTICTVPLIDVINGNTYEIIPQGGGDEDGYARGAWDWSMLWKRVPLTPQEKRLRKTKTEPYRSPAMAGGLFAIEREFFFELGLYDPGLQIWGGENFEISYKIWQCGGKLLFVPCSRVGHIYRLEGWQGNPPPIYVGSSPTLKNYVRVVEVWWDEYKDYFYASRPESQALPYGDISELKKFREDHNCKSFKWFMEEIAYDITSHYPLPPKNVDWGEIRGFETAYCIDSMGKTNGGFVELGPCHRMGGNQLFRINEANQLMQYDQCLTKGADGSKVMITHCNLNEFKEWQYFKNLHRFTHIPSGKCLDRSEVLHQVFISNCDSSKTTQKWEMNNIHSV</sequence>
<dbReference type="EC" id="2.4.1.41" evidence="5 6"/>
<dbReference type="EMBL" id="AJ002744">
    <property type="protein sequence ID" value="CAB60270.1"/>
    <property type="molecule type" value="mRNA"/>
</dbReference>
<dbReference type="EMBL" id="AK075488">
    <property type="protein sequence ID" value="BAG52155.1"/>
    <property type="molecule type" value="mRNA"/>
</dbReference>
<dbReference type="EMBL" id="CH471056">
    <property type="protein sequence ID" value="EAX04761.1"/>
    <property type="molecule type" value="Genomic_DNA"/>
</dbReference>
<dbReference type="EMBL" id="BC035303">
    <property type="protein sequence ID" value="AAH35303.1"/>
    <property type="molecule type" value="mRNA"/>
</dbReference>
<dbReference type="EMBL" id="BC046129">
    <property type="protein sequence ID" value="AAH46129.1"/>
    <property type="molecule type" value="mRNA"/>
</dbReference>
<dbReference type="EMBL" id="BC047468">
    <property type="protein sequence ID" value="AAH47468.1"/>
    <property type="molecule type" value="mRNA"/>
</dbReference>
<dbReference type="CCDS" id="CCDS3815.1"/>
<dbReference type="RefSeq" id="NP_059119.2">
    <property type="nucleotide sequence ID" value="NM_017423.3"/>
</dbReference>
<dbReference type="PDB" id="6IWQ">
    <property type="method" value="X-ray"/>
    <property type="resolution" value="2.95 A"/>
    <property type="chains" value="A/B/C/D/E/F=61-657"/>
</dbReference>
<dbReference type="PDB" id="6IWR">
    <property type="method" value="X-ray"/>
    <property type="resolution" value="2.60 A"/>
    <property type="chains" value="A/B/C/D/E/F=61-657"/>
</dbReference>
<dbReference type="PDBsum" id="6IWQ"/>
<dbReference type="PDBsum" id="6IWR"/>
<dbReference type="SMR" id="Q86SF2"/>
<dbReference type="BioGRID" id="119735">
    <property type="interactions" value="61"/>
</dbReference>
<dbReference type="FunCoup" id="Q86SF2">
    <property type="interactions" value="1271"/>
</dbReference>
<dbReference type="IntAct" id="Q86SF2">
    <property type="interactions" value="39"/>
</dbReference>
<dbReference type="MINT" id="Q86SF2"/>
<dbReference type="STRING" id="9606.ENSP00000265000"/>
<dbReference type="CAZy" id="CBM13">
    <property type="family name" value="Carbohydrate-Binding Module Family 13"/>
</dbReference>
<dbReference type="CAZy" id="GT27">
    <property type="family name" value="Glycosyltransferase Family 27"/>
</dbReference>
<dbReference type="UniLectin" id="Q86SF2"/>
<dbReference type="GlyGen" id="Q86SF2">
    <property type="glycosylation" value="2 sites, 2 O-linked glycans (2 sites)"/>
</dbReference>
<dbReference type="iPTMnet" id="Q86SF2"/>
<dbReference type="PhosphoSitePlus" id="Q86SF2"/>
<dbReference type="SwissPalm" id="Q86SF2"/>
<dbReference type="BioMuta" id="GALNT7"/>
<dbReference type="DMDM" id="51315961"/>
<dbReference type="jPOST" id="Q86SF2"/>
<dbReference type="MassIVE" id="Q86SF2"/>
<dbReference type="PaxDb" id="9606-ENSP00000265000"/>
<dbReference type="PeptideAtlas" id="Q86SF2"/>
<dbReference type="ProteomicsDB" id="69579"/>
<dbReference type="Pumba" id="Q86SF2"/>
<dbReference type="Antibodypedia" id="28517">
    <property type="antibodies" value="100 antibodies from 24 providers"/>
</dbReference>
<dbReference type="DNASU" id="51809"/>
<dbReference type="Ensembl" id="ENST00000265000.9">
    <property type="protein sequence ID" value="ENSP00000265000.4"/>
    <property type="gene ID" value="ENSG00000109586.12"/>
</dbReference>
<dbReference type="GeneID" id="51809"/>
<dbReference type="KEGG" id="hsa:51809"/>
<dbReference type="MANE-Select" id="ENST00000265000.9">
    <property type="protein sequence ID" value="ENSP00000265000.4"/>
    <property type="RefSeq nucleotide sequence ID" value="NM_017423.3"/>
    <property type="RefSeq protein sequence ID" value="NP_059119.2"/>
</dbReference>
<dbReference type="UCSC" id="uc003isz.4">
    <property type="organism name" value="human"/>
</dbReference>
<dbReference type="AGR" id="HGNC:4129"/>
<dbReference type="CTD" id="51809"/>
<dbReference type="DisGeNET" id="51809"/>
<dbReference type="GeneCards" id="GALNT7"/>
<dbReference type="HGNC" id="HGNC:4129">
    <property type="gene designation" value="GALNT7"/>
</dbReference>
<dbReference type="HPA" id="ENSG00000109586">
    <property type="expression patterns" value="Tissue enhanced (stomach)"/>
</dbReference>
<dbReference type="MIM" id="605005">
    <property type="type" value="gene"/>
</dbReference>
<dbReference type="neXtProt" id="NX_Q86SF2"/>
<dbReference type="OpenTargets" id="ENSG00000109586"/>
<dbReference type="PharmGKB" id="PA28542"/>
<dbReference type="VEuPathDB" id="HostDB:ENSG00000109586"/>
<dbReference type="eggNOG" id="KOG3737">
    <property type="taxonomic scope" value="Eukaryota"/>
</dbReference>
<dbReference type="GeneTree" id="ENSGT00940000158105"/>
<dbReference type="HOGENOM" id="CLU_013477_0_1_1"/>
<dbReference type="InParanoid" id="Q86SF2"/>
<dbReference type="OMA" id="QWFMDNI"/>
<dbReference type="OrthoDB" id="6072411at2759"/>
<dbReference type="PAN-GO" id="Q86SF2">
    <property type="GO annotations" value="3 GO annotations based on evolutionary models"/>
</dbReference>
<dbReference type="PhylomeDB" id="Q86SF2"/>
<dbReference type="TreeFam" id="TF352176"/>
<dbReference type="BRENDA" id="2.4.1.41">
    <property type="organism ID" value="2681"/>
</dbReference>
<dbReference type="PathwayCommons" id="Q86SF2"/>
<dbReference type="Reactome" id="R-HSA-913709">
    <property type="pathway name" value="O-linked glycosylation of mucins"/>
</dbReference>
<dbReference type="SignaLink" id="Q86SF2"/>
<dbReference type="UniPathway" id="UPA00378"/>
<dbReference type="BioGRID-ORCS" id="51809">
    <property type="hits" value="11 hits in 1157 CRISPR screens"/>
</dbReference>
<dbReference type="ChiTaRS" id="GALNT7">
    <property type="organism name" value="human"/>
</dbReference>
<dbReference type="GenomeRNAi" id="51809"/>
<dbReference type="Pharos" id="Q86SF2">
    <property type="development level" value="Tbio"/>
</dbReference>
<dbReference type="PRO" id="PR:Q86SF2"/>
<dbReference type="Proteomes" id="UP000005640">
    <property type="component" value="Chromosome 4"/>
</dbReference>
<dbReference type="RNAct" id="Q86SF2">
    <property type="molecule type" value="protein"/>
</dbReference>
<dbReference type="Bgee" id="ENSG00000109586">
    <property type="expression patterns" value="Expressed in mucosa of sigmoid colon and 201 other cell types or tissues"/>
</dbReference>
<dbReference type="ExpressionAtlas" id="Q86SF2">
    <property type="expression patterns" value="baseline and differential"/>
</dbReference>
<dbReference type="GO" id="GO:0070062">
    <property type="term" value="C:extracellular exosome"/>
    <property type="evidence" value="ECO:0007005"/>
    <property type="project" value="UniProtKB"/>
</dbReference>
<dbReference type="GO" id="GO:0005794">
    <property type="term" value="C:Golgi apparatus"/>
    <property type="evidence" value="ECO:0000318"/>
    <property type="project" value="GO_Central"/>
</dbReference>
<dbReference type="GO" id="GO:0000139">
    <property type="term" value="C:Golgi membrane"/>
    <property type="evidence" value="ECO:0000304"/>
    <property type="project" value="Reactome"/>
</dbReference>
<dbReference type="GO" id="GO:0016020">
    <property type="term" value="C:membrane"/>
    <property type="evidence" value="ECO:0007005"/>
    <property type="project" value="UniProtKB"/>
</dbReference>
<dbReference type="GO" id="GO:0030246">
    <property type="term" value="F:carbohydrate binding"/>
    <property type="evidence" value="ECO:0007669"/>
    <property type="project" value="UniProtKB-KW"/>
</dbReference>
<dbReference type="GO" id="GO:0046872">
    <property type="term" value="F:metal ion binding"/>
    <property type="evidence" value="ECO:0007669"/>
    <property type="project" value="UniProtKB-KW"/>
</dbReference>
<dbReference type="GO" id="GO:0004653">
    <property type="term" value="F:polypeptide N-acetylgalactosaminyltransferase activity"/>
    <property type="evidence" value="ECO:0000318"/>
    <property type="project" value="GO_Central"/>
</dbReference>
<dbReference type="GO" id="GO:0005975">
    <property type="term" value="P:carbohydrate metabolic process"/>
    <property type="evidence" value="ECO:0000304"/>
    <property type="project" value="ProtInc"/>
</dbReference>
<dbReference type="GO" id="GO:0016266">
    <property type="term" value="P:O-glycan processing"/>
    <property type="evidence" value="ECO:0000304"/>
    <property type="project" value="Reactome"/>
</dbReference>
<dbReference type="GO" id="GO:0006493">
    <property type="term" value="P:protein O-linked glycosylation"/>
    <property type="evidence" value="ECO:0000318"/>
    <property type="project" value="GO_Central"/>
</dbReference>
<dbReference type="CDD" id="cd23437">
    <property type="entry name" value="beta-trefoil_Ricin_GALNT7"/>
    <property type="match status" value="1"/>
</dbReference>
<dbReference type="CDD" id="cd02510">
    <property type="entry name" value="pp-GalNAc-T"/>
    <property type="match status" value="1"/>
</dbReference>
<dbReference type="FunFam" id="2.80.10.50:FF:000019">
    <property type="entry name" value="Polypeptide N-acetylgalactosaminyltransferase"/>
    <property type="match status" value="1"/>
</dbReference>
<dbReference type="FunFam" id="3.90.550.10:FF:000031">
    <property type="entry name" value="Polypeptide N-acetylgalactosaminyltransferase"/>
    <property type="match status" value="1"/>
</dbReference>
<dbReference type="Gene3D" id="2.80.10.50">
    <property type="match status" value="1"/>
</dbReference>
<dbReference type="Gene3D" id="3.90.550.10">
    <property type="entry name" value="Spore Coat Polysaccharide Biosynthesis Protein SpsA, Chain A"/>
    <property type="match status" value="1"/>
</dbReference>
<dbReference type="InterPro" id="IPR045885">
    <property type="entry name" value="GalNAc-T"/>
</dbReference>
<dbReference type="InterPro" id="IPR001173">
    <property type="entry name" value="Glyco_trans_2-like"/>
</dbReference>
<dbReference type="InterPro" id="IPR029044">
    <property type="entry name" value="Nucleotide-diphossugar_trans"/>
</dbReference>
<dbReference type="InterPro" id="IPR035992">
    <property type="entry name" value="Ricin_B-like_lectins"/>
</dbReference>
<dbReference type="InterPro" id="IPR000772">
    <property type="entry name" value="Ricin_B_lectin"/>
</dbReference>
<dbReference type="PANTHER" id="PTHR11675">
    <property type="entry name" value="N-ACETYLGALACTOSAMINYLTRANSFERASE"/>
    <property type="match status" value="1"/>
</dbReference>
<dbReference type="PANTHER" id="PTHR11675:SF68">
    <property type="entry name" value="N-ACETYLGALACTOSAMINYLTRANSFERASE 7"/>
    <property type="match status" value="1"/>
</dbReference>
<dbReference type="Pfam" id="PF00535">
    <property type="entry name" value="Glycos_transf_2"/>
    <property type="match status" value="1"/>
</dbReference>
<dbReference type="Pfam" id="PF00652">
    <property type="entry name" value="Ricin_B_lectin"/>
    <property type="match status" value="1"/>
</dbReference>
<dbReference type="SMART" id="SM00458">
    <property type="entry name" value="RICIN"/>
    <property type="match status" value="1"/>
</dbReference>
<dbReference type="SUPFAM" id="SSF53448">
    <property type="entry name" value="Nucleotide-diphospho-sugar transferases"/>
    <property type="match status" value="1"/>
</dbReference>
<dbReference type="SUPFAM" id="SSF50370">
    <property type="entry name" value="Ricin B-like lectins"/>
    <property type="match status" value="1"/>
</dbReference>
<dbReference type="PROSITE" id="PS50231">
    <property type="entry name" value="RICIN_B_LECTIN"/>
    <property type="match status" value="1"/>
</dbReference>
<keyword id="KW-0002">3D-structure</keyword>
<keyword id="KW-1015">Disulfide bond</keyword>
<keyword id="KW-0328">Glycosyltransferase</keyword>
<keyword id="KW-0333">Golgi apparatus</keyword>
<keyword id="KW-0430">Lectin</keyword>
<keyword id="KW-0464">Manganese</keyword>
<keyword id="KW-0472">Membrane</keyword>
<keyword id="KW-0479">Metal-binding</keyword>
<keyword id="KW-1267">Proteomics identification</keyword>
<keyword id="KW-1185">Reference proteome</keyword>
<keyword id="KW-0735">Signal-anchor</keyword>
<keyword id="KW-0808">Transferase</keyword>
<keyword id="KW-0812">Transmembrane</keyword>
<keyword id="KW-1133">Transmembrane helix</keyword>
<reference key="1">
    <citation type="journal article" date="1999" name="FEBS Lett.">
        <title>A novel human UDP-N-acetyl-D-galactosamine;polypeptide N-acetylgalactosaminyltransferase, GalNAc-T7, with specificity for partial GalNAc-glycosylated acceptor substrates.</title>
        <authorList>
            <person name="Bennett E.P."/>
            <person name="Hassan H."/>
            <person name="Hollingsworth M.A."/>
            <person name="Clausen H."/>
        </authorList>
    </citation>
    <scope>NUCLEOTIDE SEQUENCE [MRNA]</scope>
    <scope>FUNCTION</scope>
    <scope>CATALYTIC ACTIVITY</scope>
    <scope>PATHWAY</scope>
    <scope>TISSUE SPECIFICITY</scope>
</reference>
<reference key="2">
    <citation type="journal article" date="2005" name="DNA Res.">
        <title>Signal sequence and keyword trap in silico for selection of full-length human cDNAs encoding secretion or membrane proteins from oligo-capped cDNA libraries.</title>
        <authorList>
            <person name="Otsuki T."/>
            <person name="Ota T."/>
            <person name="Nishikawa T."/>
            <person name="Hayashi K."/>
            <person name="Suzuki Y."/>
            <person name="Yamamoto J."/>
            <person name="Wakamatsu A."/>
            <person name="Kimura K."/>
            <person name="Sakamoto K."/>
            <person name="Hatano N."/>
            <person name="Kawai Y."/>
            <person name="Ishii S."/>
            <person name="Saito K."/>
            <person name="Kojima S."/>
            <person name="Sugiyama T."/>
            <person name="Ono T."/>
            <person name="Okano K."/>
            <person name="Yoshikawa Y."/>
            <person name="Aotsuka S."/>
            <person name="Sasaki N."/>
            <person name="Hattori A."/>
            <person name="Okumura K."/>
            <person name="Nagai K."/>
            <person name="Sugano S."/>
            <person name="Isogai T."/>
        </authorList>
    </citation>
    <scope>NUCLEOTIDE SEQUENCE [LARGE SCALE MRNA]</scope>
    <source>
        <tissue>Ovary</tissue>
    </source>
</reference>
<reference key="3">
    <citation type="submission" date="2005-09" db="EMBL/GenBank/DDBJ databases">
        <authorList>
            <person name="Mural R.J."/>
            <person name="Istrail S."/>
            <person name="Sutton G.G."/>
            <person name="Florea L."/>
            <person name="Halpern A.L."/>
            <person name="Mobarry C.M."/>
            <person name="Lippert R."/>
            <person name="Walenz B."/>
            <person name="Shatkay H."/>
            <person name="Dew I."/>
            <person name="Miller J.R."/>
            <person name="Flanigan M.J."/>
            <person name="Edwards N.J."/>
            <person name="Bolanos R."/>
            <person name="Fasulo D."/>
            <person name="Halldorsson B.V."/>
            <person name="Hannenhalli S."/>
            <person name="Turner R."/>
            <person name="Yooseph S."/>
            <person name="Lu F."/>
            <person name="Nusskern D.R."/>
            <person name="Shue B.C."/>
            <person name="Zheng X.H."/>
            <person name="Zhong F."/>
            <person name="Delcher A.L."/>
            <person name="Huson D.H."/>
            <person name="Kravitz S.A."/>
            <person name="Mouchard L."/>
            <person name="Reinert K."/>
            <person name="Remington K.A."/>
            <person name="Clark A.G."/>
            <person name="Waterman M.S."/>
            <person name="Eichler E.E."/>
            <person name="Adams M.D."/>
            <person name="Hunkapiller M.W."/>
            <person name="Myers E.W."/>
            <person name="Venter J.C."/>
        </authorList>
    </citation>
    <scope>NUCLEOTIDE SEQUENCE [LARGE SCALE GENOMIC DNA]</scope>
</reference>
<reference key="4">
    <citation type="journal article" date="2004" name="Genome Res.">
        <title>The status, quality, and expansion of the NIH full-length cDNA project: the Mammalian Gene Collection (MGC).</title>
        <authorList>
            <consortium name="The MGC Project Team"/>
        </authorList>
    </citation>
    <scope>NUCLEOTIDE SEQUENCE [LARGE SCALE MRNA]</scope>
    <source>
        <tissue>Placenta</tissue>
        <tissue>Testis</tissue>
    </source>
</reference>
<reference key="5">
    <citation type="journal article" date="2002" name="J. Biol. Chem.">
        <title>Functional conservation of subfamilies of putative UDP-N-acetylgalactosamine:polypeptide N-acetylgalactosaminyltransferases in Drosophila, Caenorhabditis elegans, and mammals. One subfamily composed of l(2)35Aa is essential in Drosophila.</title>
        <authorList>
            <person name="Schwientek T."/>
            <person name="Bennett E.P."/>
            <person name="Flores C."/>
            <person name="Thacker J."/>
            <person name="Hollmann M."/>
            <person name="Reis C.A."/>
            <person name="Behrens J."/>
            <person name="Mandel U."/>
            <person name="Keck B."/>
            <person name="Schaefer M.A."/>
            <person name="Haselmann K."/>
            <person name="Zubarev R."/>
            <person name="Roepstorff P."/>
            <person name="Burchell J.M."/>
            <person name="Taylor-Papadimitriou J."/>
            <person name="Hollingsworth M.A."/>
            <person name="Clausen H."/>
        </authorList>
    </citation>
    <scope>FUNCTION</scope>
    <scope>CATALYTIC ACTIVITY</scope>
    <scope>PATHWAY</scope>
</reference>
<reference key="6">
    <citation type="journal article" date="2011" name="BMC Syst. Biol.">
        <title>Initial characterization of the human central proteome.</title>
        <authorList>
            <person name="Burkard T.R."/>
            <person name="Planyavsky M."/>
            <person name="Kaupe I."/>
            <person name="Breitwieser F.P."/>
            <person name="Buerckstuemmer T."/>
            <person name="Bennett K.L."/>
            <person name="Superti-Furga G."/>
            <person name="Colinge J."/>
        </authorList>
    </citation>
    <scope>IDENTIFICATION BY MASS SPECTROMETRY [LARGE SCALE ANALYSIS]</scope>
</reference>
<protein>
    <recommendedName>
        <fullName>N-acetylgalactosaminyltransferase 7</fullName>
        <ecNumber evidence="5 6">2.4.1.41</ecNumber>
    </recommendedName>
    <alternativeName>
        <fullName>Polypeptide GalNAc transferase 7</fullName>
        <shortName>GalNAc-T7</shortName>
        <shortName>pp-GaNTase 7</shortName>
    </alternativeName>
    <alternativeName>
        <fullName>Protein-UDP acetylgalactosaminyltransferase 7</fullName>
    </alternativeName>
    <alternativeName>
        <fullName>UDP-GalNAc:polypeptide N-acetylgalactosaminyltransferase 7</fullName>
    </alternativeName>
</protein>
<organism>
    <name type="scientific">Homo sapiens</name>
    <name type="common">Human</name>
    <dbReference type="NCBI Taxonomy" id="9606"/>
    <lineage>
        <taxon>Eukaryota</taxon>
        <taxon>Metazoa</taxon>
        <taxon>Chordata</taxon>
        <taxon>Craniata</taxon>
        <taxon>Vertebrata</taxon>
        <taxon>Euteleostomi</taxon>
        <taxon>Mammalia</taxon>
        <taxon>Eutheria</taxon>
        <taxon>Euarchontoglires</taxon>
        <taxon>Primates</taxon>
        <taxon>Haplorrhini</taxon>
        <taxon>Catarrhini</taxon>
        <taxon>Hominidae</taxon>
        <taxon>Homo</taxon>
    </lineage>
</organism>